<accession>Q2IM61</accession>
<keyword id="KW-1185">Reference proteome</keyword>
<keyword id="KW-0687">Ribonucleoprotein</keyword>
<keyword id="KW-0689">Ribosomal protein</keyword>
<keyword id="KW-0694">RNA-binding</keyword>
<keyword id="KW-0699">rRNA-binding</keyword>
<proteinExistence type="inferred from homology"/>
<reference key="1">
    <citation type="submission" date="2006-01" db="EMBL/GenBank/DDBJ databases">
        <title>Complete sequence of Anaeromyxobacter dehalogenans 2CP-C.</title>
        <authorList>
            <person name="Copeland A."/>
            <person name="Lucas S."/>
            <person name="Lapidus A."/>
            <person name="Barry K."/>
            <person name="Detter J.C."/>
            <person name="Glavina T."/>
            <person name="Hammon N."/>
            <person name="Israni S."/>
            <person name="Pitluck S."/>
            <person name="Brettin T."/>
            <person name="Bruce D."/>
            <person name="Han C."/>
            <person name="Tapia R."/>
            <person name="Gilna P."/>
            <person name="Kiss H."/>
            <person name="Schmutz J."/>
            <person name="Larimer F."/>
            <person name="Land M."/>
            <person name="Kyrpides N."/>
            <person name="Anderson I."/>
            <person name="Sanford R.A."/>
            <person name="Ritalahti K.M."/>
            <person name="Thomas H.S."/>
            <person name="Kirby J.R."/>
            <person name="Zhulin I.B."/>
            <person name="Loeffler F.E."/>
            <person name="Richardson P."/>
        </authorList>
    </citation>
    <scope>NUCLEOTIDE SEQUENCE [LARGE SCALE GENOMIC DNA]</scope>
    <source>
        <strain>2CP-C</strain>
    </source>
</reference>
<sequence length="240" mass="24739">MAENVLSAQKRTEQGKGPARRLRQQGLIPAVVYGGKREPTHVALDPATLLKAIETPHKFNTLLELQVEGASKHVLFKDYTVDPVTRKLLHADFLEVSMDQPVKVNVPVVTVGRAAGVAEGGILSVAAHAIVVEALPNKIPVRIEVDVTELKIGRSLHVSELKAPEGCKFKFQTDYVVVFVAVPEKEEVAAPVAAAVPGAAPAEGAAPAAGAAAPAAGAAPAAGAAPAKGGEAKGGDKGKK</sequence>
<organism>
    <name type="scientific">Anaeromyxobacter dehalogenans (strain 2CP-C)</name>
    <dbReference type="NCBI Taxonomy" id="290397"/>
    <lineage>
        <taxon>Bacteria</taxon>
        <taxon>Pseudomonadati</taxon>
        <taxon>Myxococcota</taxon>
        <taxon>Myxococcia</taxon>
        <taxon>Myxococcales</taxon>
        <taxon>Cystobacterineae</taxon>
        <taxon>Anaeromyxobacteraceae</taxon>
        <taxon>Anaeromyxobacter</taxon>
    </lineage>
</organism>
<dbReference type="EMBL" id="CP000251">
    <property type="protein sequence ID" value="ABC79897.1"/>
    <property type="molecule type" value="Genomic_DNA"/>
</dbReference>
<dbReference type="RefSeq" id="WP_011419180.1">
    <property type="nucleotide sequence ID" value="NC_007760.1"/>
</dbReference>
<dbReference type="SMR" id="Q2IM61"/>
<dbReference type="STRING" id="290397.Adeh_0120"/>
<dbReference type="KEGG" id="ade:Adeh_0120"/>
<dbReference type="eggNOG" id="COG1825">
    <property type="taxonomic scope" value="Bacteria"/>
</dbReference>
<dbReference type="HOGENOM" id="CLU_075939_2_1_7"/>
<dbReference type="OrthoDB" id="9786489at2"/>
<dbReference type="Proteomes" id="UP000001935">
    <property type="component" value="Chromosome"/>
</dbReference>
<dbReference type="GO" id="GO:0022625">
    <property type="term" value="C:cytosolic large ribosomal subunit"/>
    <property type="evidence" value="ECO:0007669"/>
    <property type="project" value="TreeGrafter"/>
</dbReference>
<dbReference type="GO" id="GO:0008097">
    <property type="term" value="F:5S rRNA binding"/>
    <property type="evidence" value="ECO:0007669"/>
    <property type="project" value="InterPro"/>
</dbReference>
<dbReference type="GO" id="GO:0003735">
    <property type="term" value="F:structural constituent of ribosome"/>
    <property type="evidence" value="ECO:0007669"/>
    <property type="project" value="InterPro"/>
</dbReference>
<dbReference type="GO" id="GO:0006412">
    <property type="term" value="P:translation"/>
    <property type="evidence" value="ECO:0007669"/>
    <property type="project" value="UniProtKB-UniRule"/>
</dbReference>
<dbReference type="CDD" id="cd00495">
    <property type="entry name" value="Ribosomal_L25_TL5_CTC"/>
    <property type="match status" value="1"/>
</dbReference>
<dbReference type="Gene3D" id="2.170.120.20">
    <property type="entry name" value="Ribosomal protein L25, beta domain"/>
    <property type="match status" value="1"/>
</dbReference>
<dbReference type="Gene3D" id="2.40.240.10">
    <property type="entry name" value="Ribosomal Protein L25, Chain P"/>
    <property type="match status" value="1"/>
</dbReference>
<dbReference type="HAMAP" id="MF_01334">
    <property type="entry name" value="Ribosomal_bL25_CTC"/>
    <property type="match status" value="1"/>
</dbReference>
<dbReference type="InterPro" id="IPR020056">
    <property type="entry name" value="Rbsml_bL25/Gln-tRNA_synth_N"/>
</dbReference>
<dbReference type="InterPro" id="IPR011035">
    <property type="entry name" value="Ribosomal_bL25/Gln-tRNA_synth"/>
</dbReference>
<dbReference type="InterPro" id="IPR020057">
    <property type="entry name" value="Ribosomal_bL25_b-dom"/>
</dbReference>
<dbReference type="InterPro" id="IPR037121">
    <property type="entry name" value="Ribosomal_bL25_C"/>
</dbReference>
<dbReference type="InterPro" id="IPR001021">
    <property type="entry name" value="Ribosomal_bL25_long"/>
</dbReference>
<dbReference type="InterPro" id="IPR029751">
    <property type="entry name" value="Ribosomal_L25_dom"/>
</dbReference>
<dbReference type="InterPro" id="IPR020930">
    <property type="entry name" value="Ribosomal_uL5_bac-type"/>
</dbReference>
<dbReference type="NCBIfam" id="TIGR00731">
    <property type="entry name" value="bL25_bact_ctc"/>
    <property type="match status" value="1"/>
</dbReference>
<dbReference type="NCBIfam" id="NF004128">
    <property type="entry name" value="PRK05618.1-2"/>
    <property type="match status" value="1"/>
</dbReference>
<dbReference type="NCBIfam" id="NF004137">
    <property type="entry name" value="PRK05618.3-3"/>
    <property type="match status" value="1"/>
</dbReference>
<dbReference type="PANTHER" id="PTHR33284">
    <property type="entry name" value="RIBOSOMAL PROTEIN L25/GLN-TRNA SYNTHETASE, ANTI-CODON-BINDING DOMAIN-CONTAINING PROTEIN"/>
    <property type="match status" value="1"/>
</dbReference>
<dbReference type="PANTHER" id="PTHR33284:SF1">
    <property type="entry name" value="RIBOSOMAL PROTEIN L25_GLN-TRNA SYNTHETASE, ANTI-CODON-BINDING DOMAIN-CONTAINING PROTEIN"/>
    <property type="match status" value="1"/>
</dbReference>
<dbReference type="Pfam" id="PF01386">
    <property type="entry name" value="Ribosomal_L25p"/>
    <property type="match status" value="1"/>
</dbReference>
<dbReference type="Pfam" id="PF14693">
    <property type="entry name" value="Ribosomal_TL5_C"/>
    <property type="match status" value="1"/>
</dbReference>
<dbReference type="SUPFAM" id="SSF50715">
    <property type="entry name" value="Ribosomal protein L25-like"/>
    <property type="match status" value="1"/>
</dbReference>
<protein>
    <recommendedName>
        <fullName evidence="1">Large ribosomal subunit protein bL25</fullName>
    </recommendedName>
    <alternativeName>
        <fullName evidence="3">50S ribosomal protein L25</fullName>
    </alternativeName>
    <alternativeName>
        <fullName evidence="1">General stress protein CTC</fullName>
    </alternativeName>
</protein>
<name>RL25_ANADE</name>
<comment type="function">
    <text evidence="1">This is one of the proteins that binds to the 5S RNA in the ribosome where it forms part of the central protuberance.</text>
</comment>
<comment type="subunit">
    <text evidence="1">Part of the 50S ribosomal subunit; part of the 5S rRNA/L5/L18/L25 subcomplex. Contacts the 5S rRNA. Binds to the 5S rRNA independently of L5 and L18.</text>
</comment>
<comment type="similarity">
    <text evidence="1">Belongs to the bacterial ribosomal protein bL25 family. CTC subfamily.</text>
</comment>
<gene>
    <name evidence="1" type="primary">rplY</name>
    <name evidence="1" type="synonym">ctc</name>
    <name type="ordered locus">Adeh_0120</name>
</gene>
<evidence type="ECO:0000255" key="1">
    <source>
        <dbReference type="HAMAP-Rule" id="MF_01334"/>
    </source>
</evidence>
<evidence type="ECO:0000256" key="2">
    <source>
        <dbReference type="SAM" id="MobiDB-lite"/>
    </source>
</evidence>
<evidence type="ECO:0000305" key="3"/>
<feature type="chain" id="PRO_0000244190" description="Large ribosomal subunit protein bL25">
    <location>
        <begin position="1"/>
        <end position="240"/>
    </location>
</feature>
<feature type="region of interest" description="Disordered" evidence="2">
    <location>
        <begin position="1"/>
        <end position="20"/>
    </location>
</feature>
<feature type="region of interest" description="Disordered" evidence="2">
    <location>
        <begin position="220"/>
        <end position="240"/>
    </location>
</feature>
<feature type="compositionally biased region" description="Low complexity" evidence="2">
    <location>
        <begin position="220"/>
        <end position="229"/>
    </location>
</feature>
<feature type="compositionally biased region" description="Basic and acidic residues" evidence="2">
    <location>
        <begin position="230"/>
        <end position="240"/>
    </location>
</feature>